<keyword id="KW-0472">Membrane</keyword>
<keyword id="KW-0496">Mitochondrion</keyword>
<keyword id="KW-0999">Mitochondrion inner membrane</keyword>
<keyword id="KW-1185">Reference proteome</keyword>
<keyword id="KW-1278">Translocase</keyword>
<keyword id="KW-0812">Transmembrane</keyword>
<keyword id="KW-1133">Transmembrane helix</keyword>
<proteinExistence type="inferred from homology"/>
<gene>
    <name type="primary">COX3</name>
</gene>
<protein>
    <recommendedName>
        <fullName>Cytochrome c oxidase subunit 3</fullName>
        <ecNumber>7.1.1.9</ecNumber>
    </recommendedName>
    <alternativeName>
        <fullName>Cytochrome c oxidase polypeptide III</fullName>
    </alternativeName>
    <alternativeName>
        <fullName>Cytochrome oxidase subunit 3</fullName>
    </alternativeName>
</protein>
<accession>A9RAG9</accession>
<organism>
    <name type="scientific">Debaryomyces hansenii (strain ATCC 36239 / CBS 767 / BCRC 21394 / JCM 1990 / NBRC 0083 / IGC 2968)</name>
    <name type="common">Yeast</name>
    <name type="synonym">Torulaspora hansenii</name>
    <dbReference type="NCBI Taxonomy" id="284592"/>
    <lineage>
        <taxon>Eukaryota</taxon>
        <taxon>Fungi</taxon>
        <taxon>Dikarya</taxon>
        <taxon>Ascomycota</taxon>
        <taxon>Saccharomycotina</taxon>
        <taxon>Pichiomycetes</taxon>
        <taxon>Debaryomycetaceae</taxon>
        <taxon>Debaryomyces</taxon>
    </lineage>
</organism>
<sequence>MTNNTRGYIQLHPFHLVGPSPWPMFTSFSLMNLALSLGLTAHGYMNNNMFMLLSTMTVLYSMTLWFKDIMAESTYLGDHTVAVKRGLMQGFLMFVVSEMLMFSSLFWAFLHSALNPTVEMGMSWPPAGMEAISAAELPLLNTMILLASGVTMTYAHHALMNGNRQNTLYGFAYSTLLMVLFVMFQGLEYTYAGFTITDGVYGSTFFALTGLHGLHMMMLIMMLAMCTMRVYNYDFTNTSHVGAETTILYLHVLDVMWLFMYMIVYWWGA</sequence>
<reference key="1">
    <citation type="journal article" date="2008" name="FEMS Yeast Res.">
        <title>Promiscuous DNA in the nuclear genomes of hemiascomycetous yeasts.</title>
        <authorList>
            <person name="Sacerdot C."/>
            <person name="Casaregola S."/>
            <person name="Lafontaine I."/>
            <person name="Tekaia F."/>
            <person name="Dujon B."/>
            <person name="Ozier-Kalogeropoulos O."/>
        </authorList>
    </citation>
    <scope>NUCLEOTIDE SEQUENCE [LARGE SCALE GENOMIC DNA]</scope>
    <source>
        <strain>ATCC 36239 / CBS 767 / BCRC 21394 / JCM 1990 / NBRC 0083 / IGC 2968</strain>
    </source>
</reference>
<evidence type="ECO:0000250" key="1">
    <source>
        <dbReference type="UniProtKB" id="P00420"/>
    </source>
</evidence>
<evidence type="ECO:0000255" key="2"/>
<evidence type="ECO:0000305" key="3"/>
<comment type="function">
    <text evidence="1">Component of the cytochrome c oxidase, the last enzyme in the mitochondrial electron transport chain which drives oxidative phosphorylation. The respiratory chain contains 3 multisubunit complexes succinate dehydrogenase (complex II, CII), ubiquinol-cytochrome c oxidoreductase (cytochrome b-c1 complex, complex III, CIII) and cytochrome c oxidase (complex IV, CIV), that cooperate to transfer electrons derived from NADH and succinate to molecular oxygen, creating an electrochemical gradient over the inner membrane that drives transmembrane transport and the ATP synthase. Cytochrome c oxidase is the component of the respiratory chain that catalyzes the reduction of oxygen to water. Electrons originating from reduced cytochrome c in the intermembrane space (IMS) are transferred via the dinuclear copper A center (CU(A)) of subunit 2 and heme A of subunit 1 to the active site in subunit 1, a binuclear center (BNC) formed by heme A3 and copper B (CU(B)). The BNC reduces molecular oxygen to 2 water molecules using 4 electrons from cytochrome c in the IMS and 4 protons from the mitochondrial matrix.</text>
</comment>
<comment type="catalytic activity">
    <reaction evidence="1">
        <text>4 Fe(II)-[cytochrome c] + O2 + 8 H(+)(in) = 4 Fe(III)-[cytochrome c] + 2 H2O + 4 H(+)(out)</text>
        <dbReference type="Rhea" id="RHEA:11436"/>
        <dbReference type="Rhea" id="RHEA-COMP:10350"/>
        <dbReference type="Rhea" id="RHEA-COMP:14399"/>
        <dbReference type="ChEBI" id="CHEBI:15377"/>
        <dbReference type="ChEBI" id="CHEBI:15378"/>
        <dbReference type="ChEBI" id="CHEBI:15379"/>
        <dbReference type="ChEBI" id="CHEBI:29033"/>
        <dbReference type="ChEBI" id="CHEBI:29034"/>
        <dbReference type="EC" id="7.1.1.9"/>
    </reaction>
    <physiologicalReaction direction="left-to-right" evidence="1">
        <dbReference type="Rhea" id="RHEA:11437"/>
    </physiologicalReaction>
</comment>
<comment type="subunit">
    <text evidence="1">Component of the cytochrome c oxidase (complex IV, CIV), a multisubunit enzyme composed of a catalytic core of 3 subunits and several supernumerary subunits. The complex exists as a monomer or a dimer and forms supercomplexes (SCs) in the inner mitochondrial membrane with ubiquinol-cytochrome c oxidoreductase (cytochrome b-c1 complex, complex III, CIII).</text>
</comment>
<comment type="subcellular location">
    <subcellularLocation>
        <location evidence="1">Mitochondrion inner membrane</location>
        <topology evidence="1">Multi-pass membrane protein</topology>
    </subcellularLocation>
</comment>
<comment type="similarity">
    <text evidence="3">Belongs to the cytochrome c oxidase subunit 3 family.</text>
</comment>
<name>COX3_DEBHA</name>
<dbReference type="EC" id="7.1.1.9"/>
<dbReference type="EMBL" id="DQ508940">
    <property type="protein sequence ID" value="ABF58070.1"/>
    <property type="molecule type" value="Genomic_DNA"/>
</dbReference>
<dbReference type="RefSeq" id="YP_001621421.1">
    <property type="nucleotide sequence ID" value="NC_010166.1"/>
</dbReference>
<dbReference type="SMR" id="A9RAG9"/>
<dbReference type="FunCoup" id="A9RAG9">
    <property type="interactions" value="248"/>
</dbReference>
<dbReference type="STRING" id="284592.A9RAG9"/>
<dbReference type="GeneID" id="5845855"/>
<dbReference type="KEGG" id="dha:cox3"/>
<dbReference type="InParanoid" id="A9RAG9"/>
<dbReference type="Proteomes" id="UP000000599">
    <property type="component" value="Mitochondrion"/>
</dbReference>
<dbReference type="GO" id="GO:0005743">
    <property type="term" value="C:mitochondrial inner membrane"/>
    <property type="evidence" value="ECO:0007669"/>
    <property type="project" value="UniProtKB-SubCell"/>
</dbReference>
<dbReference type="GO" id="GO:0004129">
    <property type="term" value="F:cytochrome-c oxidase activity"/>
    <property type="evidence" value="ECO:0007669"/>
    <property type="project" value="UniProtKB-EC"/>
</dbReference>
<dbReference type="GO" id="GO:0006123">
    <property type="term" value="P:mitochondrial electron transport, cytochrome c to oxygen"/>
    <property type="evidence" value="ECO:0007669"/>
    <property type="project" value="TreeGrafter"/>
</dbReference>
<dbReference type="CDD" id="cd01665">
    <property type="entry name" value="Cyt_c_Oxidase_III"/>
    <property type="match status" value="1"/>
</dbReference>
<dbReference type="FunFam" id="1.10.287.70:FF:000082">
    <property type="entry name" value="Cytochrome c oxidase subunit 3"/>
    <property type="match status" value="1"/>
</dbReference>
<dbReference type="Gene3D" id="1.10.287.70">
    <property type="match status" value="1"/>
</dbReference>
<dbReference type="Gene3D" id="1.20.120.80">
    <property type="entry name" value="Cytochrome c oxidase, subunit III, four-helix bundle"/>
    <property type="match status" value="1"/>
</dbReference>
<dbReference type="InterPro" id="IPR024791">
    <property type="entry name" value="Cyt_c/ubiquinol_Oxase_su3"/>
</dbReference>
<dbReference type="InterPro" id="IPR033945">
    <property type="entry name" value="Cyt_c_oxase_su3_dom"/>
</dbReference>
<dbReference type="InterPro" id="IPR000298">
    <property type="entry name" value="Cyt_c_oxidase-like_su3"/>
</dbReference>
<dbReference type="InterPro" id="IPR035973">
    <property type="entry name" value="Cyt_c_oxidase_su3-like_sf"/>
</dbReference>
<dbReference type="InterPro" id="IPR013833">
    <property type="entry name" value="Cyt_c_oxidase_su3_a-hlx"/>
</dbReference>
<dbReference type="PANTHER" id="PTHR11403:SF7">
    <property type="entry name" value="CYTOCHROME C OXIDASE SUBUNIT 3"/>
    <property type="match status" value="1"/>
</dbReference>
<dbReference type="PANTHER" id="PTHR11403">
    <property type="entry name" value="CYTOCHROME C OXIDASE SUBUNIT III"/>
    <property type="match status" value="1"/>
</dbReference>
<dbReference type="Pfam" id="PF00510">
    <property type="entry name" value="COX3"/>
    <property type="match status" value="1"/>
</dbReference>
<dbReference type="SUPFAM" id="SSF81452">
    <property type="entry name" value="Cytochrome c oxidase subunit III-like"/>
    <property type="match status" value="1"/>
</dbReference>
<dbReference type="PROSITE" id="PS50253">
    <property type="entry name" value="COX3"/>
    <property type="match status" value="1"/>
</dbReference>
<feature type="chain" id="PRO_0000355033" description="Cytochrome c oxidase subunit 3">
    <location>
        <begin position="1"/>
        <end position="269"/>
    </location>
</feature>
<feature type="transmembrane region" description="Helical" evidence="2">
    <location>
        <begin position="21"/>
        <end position="41"/>
    </location>
</feature>
<feature type="transmembrane region" description="Helical" evidence="2">
    <location>
        <begin position="49"/>
        <end position="69"/>
    </location>
</feature>
<feature type="transmembrane region" description="Helical" evidence="2">
    <location>
        <begin position="90"/>
        <end position="110"/>
    </location>
</feature>
<feature type="transmembrane region" description="Helical" evidence="2">
    <location>
        <begin position="132"/>
        <end position="152"/>
    </location>
</feature>
<feature type="transmembrane region" description="Helical" evidence="2">
    <location>
        <begin position="167"/>
        <end position="187"/>
    </location>
</feature>
<feature type="transmembrane region" description="Helical" evidence="2">
    <location>
        <begin position="205"/>
        <end position="225"/>
    </location>
</feature>
<feature type="transmembrane region" description="Helical" evidence="2">
    <location>
        <begin position="247"/>
        <end position="267"/>
    </location>
</feature>
<geneLocation type="mitochondrion"/>